<keyword id="KW-0997">Cell inner membrane</keyword>
<keyword id="KW-1003">Cell membrane</keyword>
<keyword id="KW-0472">Membrane</keyword>
<keyword id="KW-0812">Transmembrane</keyword>
<keyword id="KW-1133">Transmembrane helix</keyword>
<keyword id="KW-0813">Transport</keyword>
<organism>
    <name type="scientific">Salmonella dublin (strain CT_02021853)</name>
    <dbReference type="NCBI Taxonomy" id="439851"/>
    <lineage>
        <taxon>Bacteria</taxon>
        <taxon>Pseudomonadati</taxon>
        <taxon>Pseudomonadota</taxon>
        <taxon>Gammaproteobacteria</taxon>
        <taxon>Enterobacterales</taxon>
        <taxon>Enterobacteriaceae</taxon>
        <taxon>Salmonella</taxon>
    </lineage>
</organism>
<proteinExistence type="inferred from homology"/>
<sequence length="1026" mass="110980">MRFFALFIYRPVATILIAAAITLCGILGFRLLPVAPLPQVDFPVIMVSASLPGASPETMASSVATPLERSLGRIAGVNEMTSSSSLGSTRIILEFNFDRDINGAARDVQAAINAAQSLLPGGMPSRPTYRKANPSDAPIMILTLTSESWSQGKLYDFASTQLAQTIAQIDGVGDVDVGGSSLPAVRVGLNPQALFNQGVSLDEVREAIDSANVRRPQGAIEDSVHRWQIQTNDELKTAAEYQPLIIHYNNGAAVRLGDVASVTDSVQDVRNAGMTNAKPAILLMIRKLPEANIIQTVDGIRAKLPELRAMIPAAIDLQIAQDRSPTIRASLQEVEETLAISVALVILVVFLFLRSGRATLIPAVAVPVSLIGTFAAMYLCGFSLNNLSLMALTIATGFVVDDAIVVLENIARHLEAGMKPLQAALQGTREVGFTVISMSLSLVAVFLPLLLMGGLPGRLLREFAVTLSVAIGISLVVSLTLTPMMCGWMLKSSKPRTQPRKRGVGRLLVALQQGYGTSLKWVLNHTRLVGVVFLGTVALNIWLYIAIPKTFFPEQDTGVLMGGIQADQSISFQAMRGKLQDFMKIIRDDPAVNNVTGFTGGSRVNSGMMFITLKPRGERKETAQQIIDRLRVKQAKEPGARLFLMAVQDIRVGGRQANASYQYTLLSDSLAALREWEPKIRKALSALPQLADVNSDQQDNGAEMNLIYDRDTMSRLGIDVQAANSLLNNAFGQRQISTIYQPMNQYKVVMEVDPRYSQDISALEKMFVINRDGKAIPLSYFAQWRPANAPLSVNHQGLSAASTIAFNLPTGTSLSQATEAINRTMTQLGVPSTVRGSFSGTAQVFQQTMNSQLILIVAAIATVYIVLGILYESYVHPLTILSTLPSAGVGALLALELFNAPFSLIALIGIMLLIGIVKKNAIMMVDFALEAQRSGGLTPEQAIFQACLLRFRPIMMTTLAALFGALPLVLSGGDGSELRQPLGITIVGGLVMSQLLTLYTTPVVYLFFDRLRLRFSRKNSKPVVEI</sequence>
<protein>
    <recommendedName>
        <fullName evidence="1">Multidrug resistance protein MdtC</fullName>
    </recommendedName>
    <alternativeName>
        <fullName evidence="1">Multidrug transporter MdtC</fullName>
    </alternativeName>
</protein>
<comment type="subunit">
    <text evidence="1">Part of a tripartite efflux system composed of MdtA, MdtB and MdtC. MdtC forms a heteromultimer with MdtB.</text>
</comment>
<comment type="subcellular location">
    <subcellularLocation>
        <location evidence="1">Cell inner membrane</location>
        <topology evidence="1">Multi-pass membrane protein</topology>
    </subcellularLocation>
</comment>
<comment type="similarity">
    <text evidence="1">Belongs to the resistance-nodulation-cell division (RND) (TC 2.A.6) family. MdtC subfamily.</text>
</comment>
<reference key="1">
    <citation type="journal article" date="2011" name="J. Bacteriol.">
        <title>Comparative genomics of 28 Salmonella enterica isolates: evidence for CRISPR-mediated adaptive sublineage evolution.</title>
        <authorList>
            <person name="Fricke W.F."/>
            <person name="Mammel M.K."/>
            <person name="McDermott P.F."/>
            <person name="Tartera C."/>
            <person name="White D.G."/>
            <person name="Leclerc J.E."/>
            <person name="Ravel J."/>
            <person name="Cebula T.A."/>
        </authorList>
    </citation>
    <scope>NUCLEOTIDE SEQUENCE [LARGE SCALE GENOMIC DNA]</scope>
    <source>
        <strain>CT_02021853</strain>
    </source>
</reference>
<accession>B5FMU7</accession>
<evidence type="ECO:0000255" key="1">
    <source>
        <dbReference type="HAMAP-Rule" id="MF_01424"/>
    </source>
</evidence>
<gene>
    <name evidence="1" type="primary">mdtC</name>
    <name type="ordered locus">SeD_A2474</name>
</gene>
<feature type="chain" id="PRO_1000145678" description="Multidrug resistance protein MdtC">
    <location>
        <begin position="1"/>
        <end position="1026"/>
    </location>
</feature>
<feature type="transmembrane region" description="Helical" evidence="1">
    <location>
        <begin position="15"/>
        <end position="35"/>
    </location>
</feature>
<feature type="transmembrane region" description="Helical" evidence="1">
    <location>
        <begin position="333"/>
        <end position="353"/>
    </location>
</feature>
<feature type="transmembrane region" description="Helical" evidence="1">
    <location>
        <begin position="360"/>
        <end position="380"/>
    </location>
</feature>
<feature type="transmembrane region" description="Helical" evidence="1">
    <location>
        <begin position="387"/>
        <end position="407"/>
    </location>
</feature>
<feature type="transmembrane region" description="Helical" evidence="1">
    <location>
        <begin position="431"/>
        <end position="451"/>
    </location>
</feature>
<feature type="transmembrane region" description="Helical" evidence="1">
    <location>
        <begin position="463"/>
        <end position="483"/>
    </location>
</feature>
<feature type="transmembrane region" description="Helical" evidence="1">
    <location>
        <begin position="528"/>
        <end position="548"/>
    </location>
</feature>
<feature type="transmembrane region" description="Helical" evidence="1">
    <location>
        <begin position="853"/>
        <end position="873"/>
    </location>
</feature>
<feature type="transmembrane region" description="Helical" evidence="1">
    <location>
        <begin position="897"/>
        <end position="917"/>
    </location>
</feature>
<feature type="transmembrane region" description="Helical" evidence="1">
    <location>
        <begin position="953"/>
        <end position="973"/>
    </location>
</feature>
<feature type="transmembrane region" description="Helical" evidence="1">
    <location>
        <begin position="984"/>
        <end position="1004"/>
    </location>
</feature>
<name>MDTC_SALDC</name>
<dbReference type="EMBL" id="CP001144">
    <property type="protein sequence ID" value="ACH77343.1"/>
    <property type="molecule type" value="Genomic_DNA"/>
</dbReference>
<dbReference type="RefSeq" id="WP_001210081.1">
    <property type="nucleotide sequence ID" value="NC_011205.1"/>
</dbReference>
<dbReference type="SMR" id="B5FMU7"/>
<dbReference type="KEGG" id="sed:SeD_A2474"/>
<dbReference type="HOGENOM" id="CLU_002755_1_2_6"/>
<dbReference type="Proteomes" id="UP000008322">
    <property type="component" value="Chromosome"/>
</dbReference>
<dbReference type="GO" id="GO:0005886">
    <property type="term" value="C:plasma membrane"/>
    <property type="evidence" value="ECO:0007669"/>
    <property type="project" value="UniProtKB-SubCell"/>
</dbReference>
<dbReference type="GO" id="GO:0042910">
    <property type="term" value="F:xenobiotic transmembrane transporter activity"/>
    <property type="evidence" value="ECO:0007669"/>
    <property type="project" value="TreeGrafter"/>
</dbReference>
<dbReference type="FunFam" id="1.20.1640.10:FF:000001">
    <property type="entry name" value="Efflux pump membrane transporter"/>
    <property type="match status" value="1"/>
</dbReference>
<dbReference type="FunFam" id="3.30.70.1430:FF:000001">
    <property type="entry name" value="Efflux pump membrane transporter"/>
    <property type="match status" value="1"/>
</dbReference>
<dbReference type="FunFam" id="3.30.2090.10:FF:000004">
    <property type="entry name" value="Multidrug resistance protein MdtC"/>
    <property type="match status" value="1"/>
</dbReference>
<dbReference type="FunFam" id="3.30.2090.10:FF:000005">
    <property type="entry name" value="Multidrug resistance protein MdtC"/>
    <property type="match status" value="1"/>
</dbReference>
<dbReference type="Gene3D" id="3.30.70.1430">
    <property type="entry name" value="Multidrug efflux transporter AcrB pore domain"/>
    <property type="match status" value="2"/>
</dbReference>
<dbReference type="Gene3D" id="3.30.70.1440">
    <property type="entry name" value="Multidrug efflux transporter AcrB pore domain"/>
    <property type="match status" value="1"/>
</dbReference>
<dbReference type="Gene3D" id="3.30.70.1320">
    <property type="entry name" value="Multidrug efflux transporter AcrB pore domain like"/>
    <property type="match status" value="1"/>
</dbReference>
<dbReference type="Gene3D" id="3.30.2090.10">
    <property type="entry name" value="Multidrug efflux transporter AcrB TolC docking domain, DN and DC subdomains"/>
    <property type="match status" value="2"/>
</dbReference>
<dbReference type="Gene3D" id="1.20.1640.10">
    <property type="entry name" value="Multidrug efflux transporter AcrB transmembrane domain"/>
    <property type="match status" value="2"/>
</dbReference>
<dbReference type="HAMAP" id="MF_01424">
    <property type="entry name" value="MdtC"/>
    <property type="match status" value="1"/>
</dbReference>
<dbReference type="InterPro" id="IPR027463">
    <property type="entry name" value="AcrB_DN_DC_subdom"/>
</dbReference>
<dbReference type="InterPro" id="IPR001036">
    <property type="entry name" value="Acrflvin-R"/>
</dbReference>
<dbReference type="InterPro" id="IPR023931">
    <property type="entry name" value="Multidrug-R_MdtC"/>
</dbReference>
<dbReference type="NCBIfam" id="NF007905">
    <property type="entry name" value="PRK10614.1"/>
    <property type="match status" value="1"/>
</dbReference>
<dbReference type="NCBIfam" id="NF033617">
    <property type="entry name" value="RND_permease_2"/>
    <property type="match status" value="1"/>
</dbReference>
<dbReference type="PANTHER" id="PTHR32063">
    <property type="match status" value="1"/>
</dbReference>
<dbReference type="PANTHER" id="PTHR32063:SF34">
    <property type="entry name" value="MULTIDRUG RESISTANCE PROTEIN MDTC"/>
    <property type="match status" value="1"/>
</dbReference>
<dbReference type="Pfam" id="PF00873">
    <property type="entry name" value="ACR_tran"/>
    <property type="match status" value="1"/>
</dbReference>
<dbReference type="PRINTS" id="PR00702">
    <property type="entry name" value="ACRIFLAVINRP"/>
</dbReference>
<dbReference type="SUPFAM" id="SSF82693">
    <property type="entry name" value="Multidrug efflux transporter AcrB pore domain, PN1, PN2, PC1 and PC2 subdomains"/>
    <property type="match status" value="4"/>
</dbReference>
<dbReference type="SUPFAM" id="SSF82714">
    <property type="entry name" value="Multidrug efflux transporter AcrB TolC docking domain, DN and DC subdomains"/>
    <property type="match status" value="2"/>
</dbReference>
<dbReference type="SUPFAM" id="SSF82866">
    <property type="entry name" value="Multidrug efflux transporter AcrB transmembrane domain"/>
    <property type="match status" value="2"/>
</dbReference>